<organism>
    <name type="scientific">Arabidopsis thaliana</name>
    <name type="common">Mouse-ear cress</name>
    <dbReference type="NCBI Taxonomy" id="3702"/>
    <lineage>
        <taxon>Eukaryota</taxon>
        <taxon>Viridiplantae</taxon>
        <taxon>Streptophyta</taxon>
        <taxon>Embryophyta</taxon>
        <taxon>Tracheophyta</taxon>
        <taxon>Spermatophyta</taxon>
        <taxon>Magnoliopsida</taxon>
        <taxon>eudicotyledons</taxon>
        <taxon>Gunneridae</taxon>
        <taxon>Pentapetalae</taxon>
        <taxon>rosids</taxon>
        <taxon>malvids</taxon>
        <taxon>Brassicales</taxon>
        <taxon>Brassicaceae</taxon>
        <taxon>Camelineae</taxon>
        <taxon>Arabidopsis</taxon>
    </lineage>
</organism>
<proteinExistence type="evidence at transcript level"/>
<reference key="1">
    <citation type="submission" date="1999-10" db="EMBL/GenBank/DDBJ databases">
        <title>The beta-galactosidases are encoding by a multigene family in Arabidopsis thaliana.</title>
        <authorList>
            <person name="Gy I."/>
            <person name="Kreis M."/>
            <person name="Lecharny A."/>
        </authorList>
    </citation>
    <scope>NUCLEOTIDE SEQUENCE [MRNA]</scope>
</reference>
<reference key="2">
    <citation type="journal article" date="1999" name="Nature">
        <title>Sequence and analysis of chromosome 4 of the plant Arabidopsis thaliana.</title>
        <authorList>
            <person name="Mayer K.F.X."/>
            <person name="Schueller C."/>
            <person name="Wambutt R."/>
            <person name="Murphy G."/>
            <person name="Volckaert G."/>
            <person name="Pohl T."/>
            <person name="Duesterhoeft A."/>
            <person name="Stiekema W."/>
            <person name="Entian K.-D."/>
            <person name="Terryn N."/>
            <person name="Harris B."/>
            <person name="Ansorge W."/>
            <person name="Brandt P."/>
            <person name="Grivell L.A."/>
            <person name="Rieger M."/>
            <person name="Weichselgartner M."/>
            <person name="de Simone V."/>
            <person name="Obermaier B."/>
            <person name="Mache R."/>
            <person name="Mueller M."/>
            <person name="Kreis M."/>
            <person name="Delseny M."/>
            <person name="Puigdomenech P."/>
            <person name="Watson M."/>
            <person name="Schmidtheini T."/>
            <person name="Reichert B."/>
            <person name="Portetelle D."/>
            <person name="Perez-Alonso M."/>
            <person name="Boutry M."/>
            <person name="Bancroft I."/>
            <person name="Vos P."/>
            <person name="Hoheisel J."/>
            <person name="Zimmermann W."/>
            <person name="Wedler H."/>
            <person name="Ridley P."/>
            <person name="Langham S.-A."/>
            <person name="McCullagh B."/>
            <person name="Bilham L."/>
            <person name="Robben J."/>
            <person name="van der Schueren J."/>
            <person name="Grymonprez B."/>
            <person name="Chuang Y.-J."/>
            <person name="Vandenbussche F."/>
            <person name="Braeken M."/>
            <person name="Weltjens I."/>
            <person name="Voet M."/>
            <person name="Bastiaens I."/>
            <person name="Aert R."/>
            <person name="Defoor E."/>
            <person name="Weitzenegger T."/>
            <person name="Bothe G."/>
            <person name="Ramsperger U."/>
            <person name="Hilbert H."/>
            <person name="Braun M."/>
            <person name="Holzer E."/>
            <person name="Brandt A."/>
            <person name="Peters S."/>
            <person name="van Staveren M."/>
            <person name="Dirkse W."/>
            <person name="Mooijman P."/>
            <person name="Klein Lankhorst R."/>
            <person name="Rose M."/>
            <person name="Hauf J."/>
            <person name="Koetter P."/>
            <person name="Berneiser S."/>
            <person name="Hempel S."/>
            <person name="Feldpausch M."/>
            <person name="Lamberth S."/>
            <person name="Van den Daele H."/>
            <person name="De Keyser A."/>
            <person name="Buysshaert C."/>
            <person name="Gielen J."/>
            <person name="Villarroel R."/>
            <person name="De Clercq R."/>
            <person name="van Montagu M."/>
            <person name="Rogers J."/>
            <person name="Cronin A."/>
            <person name="Quail M.A."/>
            <person name="Bray-Allen S."/>
            <person name="Clark L."/>
            <person name="Doggett J."/>
            <person name="Hall S."/>
            <person name="Kay M."/>
            <person name="Lennard N."/>
            <person name="McLay K."/>
            <person name="Mayes R."/>
            <person name="Pettett A."/>
            <person name="Rajandream M.A."/>
            <person name="Lyne M."/>
            <person name="Benes V."/>
            <person name="Rechmann S."/>
            <person name="Borkova D."/>
            <person name="Bloecker H."/>
            <person name="Scharfe M."/>
            <person name="Grimm M."/>
            <person name="Loehnert T.-H."/>
            <person name="Dose S."/>
            <person name="de Haan M."/>
            <person name="Maarse A.C."/>
            <person name="Schaefer M."/>
            <person name="Mueller-Auer S."/>
            <person name="Gabel C."/>
            <person name="Fuchs M."/>
            <person name="Fartmann B."/>
            <person name="Granderath K."/>
            <person name="Dauner D."/>
            <person name="Herzl A."/>
            <person name="Neumann S."/>
            <person name="Argiriou A."/>
            <person name="Vitale D."/>
            <person name="Liguori R."/>
            <person name="Piravandi E."/>
            <person name="Massenet O."/>
            <person name="Quigley F."/>
            <person name="Clabauld G."/>
            <person name="Muendlein A."/>
            <person name="Felber R."/>
            <person name="Schnabl S."/>
            <person name="Hiller R."/>
            <person name="Schmidt W."/>
            <person name="Lecharny A."/>
            <person name="Aubourg S."/>
            <person name="Chefdor F."/>
            <person name="Cooke R."/>
            <person name="Berger C."/>
            <person name="Monfort A."/>
            <person name="Casacuberta E."/>
            <person name="Gibbons T."/>
            <person name="Weber N."/>
            <person name="Vandenbol M."/>
            <person name="Bargues M."/>
            <person name="Terol J."/>
            <person name="Torres A."/>
            <person name="Perez-Perez A."/>
            <person name="Purnelle B."/>
            <person name="Bent E."/>
            <person name="Johnson S."/>
            <person name="Tacon D."/>
            <person name="Jesse T."/>
            <person name="Heijnen L."/>
            <person name="Schwarz S."/>
            <person name="Scholler P."/>
            <person name="Heber S."/>
            <person name="Francs P."/>
            <person name="Bielke C."/>
            <person name="Frishman D."/>
            <person name="Haase D."/>
            <person name="Lemcke K."/>
            <person name="Mewes H.-W."/>
            <person name="Stocker S."/>
            <person name="Zaccaria P."/>
            <person name="Bevan M."/>
            <person name="Wilson R.K."/>
            <person name="de la Bastide M."/>
            <person name="Habermann K."/>
            <person name="Parnell L."/>
            <person name="Dedhia N."/>
            <person name="Gnoj L."/>
            <person name="Schutz K."/>
            <person name="Huang E."/>
            <person name="Spiegel L."/>
            <person name="Sekhon M."/>
            <person name="Murray J."/>
            <person name="Sheet P."/>
            <person name="Cordes M."/>
            <person name="Abu-Threideh J."/>
            <person name="Stoneking T."/>
            <person name="Kalicki J."/>
            <person name="Graves T."/>
            <person name="Harmon G."/>
            <person name="Edwards J."/>
            <person name="Latreille P."/>
            <person name="Courtney L."/>
            <person name="Cloud J."/>
            <person name="Abbott A."/>
            <person name="Scott K."/>
            <person name="Johnson D."/>
            <person name="Minx P."/>
            <person name="Bentley D."/>
            <person name="Fulton B."/>
            <person name="Miller N."/>
            <person name="Greco T."/>
            <person name="Kemp K."/>
            <person name="Kramer J."/>
            <person name="Fulton L."/>
            <person name="Mardis E."/>
            <person name="Dante M."/>
            <person name="Pepin K."/>
            <person name="Hillier L.W."/>
            <person name="Nelson J."/>
            <person name="Spieth J."/>
            <person name="Ryan E."/>
            <person name="Andrews S."/>
            <person name="Geisel C."/>
            <person name="Layman D."/>
            <person name="Du H."/>
            <person name="Ali J."/>
            <person name="Berghoff A."/>
            <person name="Jones K."/>
            <person name="Drone K."/>
            <person name="Cotton M."/>
            <person name="Joshu C."/>
            <person name="Antonoiu B."/>
            <person name="Zidanic M."/>
            <person name="Strong C."/>
            <person name="Sun H."/>
            <person name="Lamar B."/>
            <person name="Yordan C."/>
            <person name="Ma P."/>
            <person name="Zhong J."/>
            <person name="Preston R."/>
            <person name="Vil D."/>
            <person name="Shekher M."/>
            <person name="Matero A."/>
            <person name="Shah R."/>
            <person name="Swaby I.K."/>
            <person name="O'Shaughnessy A."/>
            <person name="Rodriguez M."/>
            <person name="Hoffman J."/>
            <person name="Till S."/>
            <person name="Granat S."/>
            <person name="Shohdy N."/>
            <person name="Hasegawa A."/>
            <person name="Hameed A."/>
            <person name="Lodhi M."/>
            <person name="Johnson A."/>
            <person name="Chen E."/>
            <person name="Marra M.A."/>
            <person name="Martienssen R."/>
            <person name="McCombie W.R."/>
        </authorList>
    </citation>
    <scope>NUCLEOTIDE SEQUENCE [LARGE SCALE GENOMIC DNA]</scope>
    <source>
        <strain>cv. Columbia</strain>
    </source>
</reference>
<reference key="3">
    <citation type="journal article" date="2017" name="Plant J.">
        <title>Araport11: a complete reannotation of the Arabidopsis thaliana reference genome.</title>
        <authorList>
            <person name="Cheng C.Y."/>
            <person name="Krishnakumar V."/>
            <person name="Chan A.P."/>
            <person name="Thibaud-Nissen F."/>
            <person name="Schobel S."/>
            <person name="Town C.D."/>
        </authorList>
    </citation>
    <scope>GENOME REANNOTATION</scope>
    <source>
        <strain>cv. Columbia</strain>
    </source>
</reference>
<reference key="4">
    <citation type="journal article" date="2007" name="Phytochemistry">
        <title>Functional genomic analysis of Arabidopsis thaliana glycoside hydrolase family 35.</title>
        <authorList>
            <person name="Ahn Y.O."/>
            <person name="Zheng M."/>
            <person name="Bevan D.R."/>
            <person name="Esen A."/>
            <person name="Shiu S.-H."/>
            <person name="Benson J."/>
            <person name="Peng H.-P."/>
            <person name="Miller J.T."/>
            <person name="Cheng C.-L."/>
            <person name="Poulton J.E."/>
            <person name="Shih M.-C."/>
        </authorList>
    </citation>
    <scope>GENE FAMILY</scope>
    <scope>NOMENCLATURE</scope>
</reference>
<evidence type="ECO:0000255" key="1"/>
<evidence type="ECO:0000255" key="2">
    <source>
        <dbReference type="PROSITE-ProRule" id="PRU00260"/>
    </source>
</evidence>
<evidence type="ECO:0000256" key="3">
    <source>
        <dbReference type="SAM" id="MobiDB-lite"/>
    </source>
</evidence>
<evidence type="ECO:0000305" key="4"/>
<accession>Q9SCU8</accession>
<accession>F4JUE4</accession>
<accession>Q9SZN8</accession>
<feature type="signal peptide" evidence="1">
    <location>
        <begin position="1"/>
        <end position="31"/>
    </location>
</feature>
<feature type="chain" id="PRO_5000065887" description="Beta-galactosidase 14">
    <location>
        <begin position="32"/>
        <end position="887"/>
    </location>
</feature>
<feature type="domain" description="SUEL-type lectin" evidence="2">
    <location>
        <begin position="752"/>
        <end position="838"/>
    </location>
</feature>
<feature type="region of interest" description="Disordered" evidence="3">
    <location>
        <begin position="838"/>
        <end position="887"/>
    </location>
</feature>
<feature type="compositionally biased region" description="Basic and acidic residues" evidence="3">
    <location>
        <begin position="838"/>
        <end position="852"/>
    </location>
</feature>
<feature type="compositionally biased region" description="Acidic residues" evidence="3">
    <location>
        <begin position="853"/>
        <end position="871"/>
    </location>
</feature>
<feature type="compositionally biased region" description="Basic and acidic residues" evidence="3">
    <location>
        <begin position="872"/>
        <end position="887"/>
    </location>
</feature>
<feature type="active site" description="Proton donor" evidence="1">
    <location>
        <position position="197"/>
    </location>
</feature>
<feature type="active site" description="Nucleophile" evidence="1">
    <location>
        <position position="268"/>
    </location>
</feature>
<feature type="glycosylation site" description="N-linked (GlcNAc...) asparagine" evidence="1">
    <location>
        <position position="269"/>
    </location>
</feature>
<feature type="glycosylation site" description="N-linked (GlcNAc...) asparagine" evidence="1">
    <location>
        <position position="300"/>
    </location>
</feature>
<feature type="glycosylation site" description="N-linked (GlcNAc...) asparagine" evidence="1">
    <location>
        <position position="395"/>
    </location>
</feature>
<feature type="glycosylation site" description="N-linked (GlcNAc...) asparagine" evidence="1">
    <location>
        <position position="785"/>
    </location>
</feature>
<feature type="sequence conflict" description="In Ref. 1; CAB64750." evidence="4" ref="1">
    <original>L</original>
    <variation>F</variation>
    <location>
        <position position="57"/>
    </location>
</feature>
<feature type="sequence conflict" description="In Ref. 1; CAB64750." evidence="4" ref="1">
    <original>H</original>
    <variation>D</variation>
    <location>
        <position position="70"/>
    </location>
</feature>
<feature type="sequence conflict" description="In Ref. 1; CAB64750." evidence="4" ref="1">
    <original>V</original>
    <variation>A</variation>
    <location>
        <position position="286"/>
    </location>
</feature>
<feature type="sequence conflict" description="In Ref. 1; CAB64750." evidence="4" ref="1">
    <original>K</original>
    <variation>E</variation>
    <location>
        <position position="627"/>
    </location>
</feature>
<feature type="sequence conflict" description="In Ref. 1; CAB64750." evidence="4" ref="1">
    <original>A</original>
    <variation>G</variation>
    <location>
        <position position="653"/>
    </location>
</feature>
<gene>
    <name type="primary">BGAL14</name>
    <name type="ordered locus">At4g38590</name>
    <name type="ORF">F20M13.150</name>
</gene>
<protein>
    <recommendedName>
        <fullName>Beta-galactosidase 14</fullName>
        <shortName>Lactase 14</shortName>
        <ecNumber>3.2.1.23</ecNumber>
    </recommendedName>
</protein>
<comment type="catalytic activity">
    <reaction>
        <text>Hydrolysis of terminal non-reducing beta-D-galactose residues in beta-D-galactosides.</text>
        <dbReference type="EC" id="3.2.1.23"/>
    </reaction>
</comment>
<comment type="subcellular location">
    <subcellularLocation>
        <location evidence="4">Secreted</location>
        <location evidence="4">Extracellular space</location>
        <location evidence="4">Apoplast</location>
    </subcellularLocation>
</comment>
<comment type="alternative products">
    <event type="alternative splicing"/>
    <isoform>
        <id>Q9SCU8-1</id>
        <name>1</name>
        <sequence type="displayed"/>
    </isoform>
    <text>A number of isoforms are produced. According to EST sequences.</text>
</comment>
<comment type="similarity">
    <text evidence="4">Belongs to the glycosyl hydrolase 35 family.</text>
</comment>
<comment type="sequence caution" evidence="4">
    <conflict type="erroneous gene model prediction">
        <sequence resource="EMBL-CDS" id="CAB80523"/>
    </conflict>
</comment>
<name>BGA14_ARATH</name>
<dbReference type="EC" id="3.2.1.23"/>
<dbReference type="EMBL" id="AJ270310">
    <property type="protein sequence ID" value="CAB64750.1"/>
    <property type="molecule type" value="mRNA"/>
</dbReference>
<dbReference type="EMBL" id="AL035540">
    <property type="protein sequence ID" value="CAB37515.1"/>
    <property type="status" value="ALT_SEQ"/>
    <property type="molecule type" value="Genomic_DNA"/>
</dbReference>
<dbReference type="EMBL" id="AL161593">
    <property type="protein sequence ID" value="CAB80523.1"/>
    <property type="status" value="ALT_SEQ"/>
    <property type="molecule type" value="Genomic_DNA"/>
</dbReference>
<dbReference type="EMBL" id="CP002687">
    <property type="status" value="NOT_ANNOTATED_CDS"/>
    <property type="molecule type" value="Genomic_DNA"/>
</dbReference>
<dbReference type="PIR" id="T05687">
    <property type="entry name" value="T05687"/>
</dbReference>
<dbReference type="SMR" id="Q9SCU8"/>
<dbReference type="STRING" id="3702.Q9SCU8"/>
<dbReference type="CAZy" id="GH35">
    <property type="family name" value="Glycoside Hydrolase Family 35"/>
</dbReference>
<dbReference type="GlyCosmos" id="Q9SCU8">
    <property type="glycosylation" value="4 sites, No reported glycans"/>
</dbReference>
<dbReference type="GlyGen" id="Q9SCU8">
    <property type="glycosylation" value="4 sites"/>
</dbReference>
<dbReference type="PaxDb" id="3702-AT4G38590.2"/>
<dbReference type="ProteomicsDB" id="240759">
    <molecule id="Q9SCU8-1"/>
</dbReference>
<dbReference type="Araport" id="AT4G38590"/>
<dbReference type="TAIR" id="AT4G38590">
    <property type="gene designation" value="BGAL14"/>
</dbReference>
<dbReference type="eggNOG" id="KOG0495">
    <property type="taxonomic scope" value="Eukaryota"/>
</dbReference>
<dbReference type="eggNOG" id="KOG0496">
    <property type="taxonomic scope" value="Eukaryota"/>
</dbReference>
<dbReference type="HOGENOM" id="CLU_007853_4_0_1"/>
<dbReference type="InParanoid" id="Q9SCU8"/>
<dbReference type="PhylomeDB" id="Q9SCU8"/>
<dbReference type="PRO" id="PR:Q9SCU8"/>
<dbReference type="Proteomes" id="UP000006548">
    <property type="component" value="Chromosome 4"/>
</dbReference>
<dbReference type="ExpressionAtlas" id="Q9SCU8">
    <property type="expression patterns" value="baseline and differential"/>
</dbReference>
<dbReference type="GO" id="GO:0048046">
    <property type="term" value="C:apoplast"/>
    <property type="evidence" value="ECO:0007669"/>
    <property type="project" value="UniProtKB-SubCell"/>
</dbReference>
<dbReference type="GO" id="GO:0009505">
    <property type="term" value="C:plant-type cell wall"/>
    <property type="evidence" value="ECO:0000318"/>
    <property type="project" value="GO_Central"/>
</dbReference>
<dbReference type="GO" id="GO:0005773">
    <property type="term" value="C:vacuole"/>
    <property type="evidence" value="ECO:0000318"/>
    <property type="project" value="GO_Central"/>
</dbReference>
<dbReference type="GO" id="GO:0004565">
    <property type="term" value="F:beta-galactosidase activity"/>
    <property type="evidence" value="ECO:0000318"/>
    <property type="project" value="GO_Central"/>
</dbReference>
<dbReference type="GO" id="GO:0030246">
    <property type="term" value="F:carbohydrate binding"/>
    <property type="evidence" value="ECO:0007669"/>
    <property type="project" value="InterPro"/>
</dbReference>
<dbReference type="GO" id="GO:0019388">
    <property type="term" value="P:galactose catabolic process"/>
    <property type="evidence" value="ECO:0000318"/>
    <property type="project" value="GO_Central"/>
</dbReference>
<dbReference type="GO" id="GO:0009827">
    <property type="term" value="P:plant-type cell wall modification"/>
    <property type="evidence" value="ECO:0000318"/>
    <property type="project" value="GO_Central"/>
</dbReference>
<dbReference type="CDD" id="cd22842">
    <property type="entry name" value="Gal_Rha_Lectin_BGal"/>
    <property type="match status" value="1"/>
</dbReference>
<dbReference type="FunFam" id="2.60.120.260:FF:000050">
    <property type="entry name" value="Beta-galactosidase"/>
    <property type="match status" value="1"/>
</dbReference>
<dbReference type="FunFam" id="2.60.120.740:FF:000002">
    <property type="entry name" value="Beta-galactosidase"/>
    <property type="match status" value="1"/>
</dbReference>
<dbReference type="FunFam" id="3.20.20.80:FF:000006">
    <property type="entry name" value="Beta-galactosidase"/>
    <property type="match status" value="1"/>
</dbReference>
<dbReference type="Gene3D" id="2.60.120.740">
    <property type="match status" value="1"/>
</dbReference>
<dbReference type="Gene3D" id="2.60.120.260">
    <property type="entry name" value="Galactose-binding domain-like"/>
    <property type="match status" value="2"/>
</dbReference>
<dbReference type="Gene3D" id="3.20.20.80">
    <property type="entry name" value="Glycosidases"/>
    <property type="match status" value="1"/>
</dbReference>
<dbReference type="InterPro" id="IPR048913">
    <property type="entry name" value="BetaGal_gal-bd"/>
</dbReference>
<dbReference type="InterPro" id="IPR008979">
    <property type="entry name" value="Galactose-bd-like_sf"/>
</dbReference>
<dbReference type="InterPro" id="IPR041392">
    <property type="entry name" value="GHD"/>
</dbReference>
<dbReference type="InterPro" id="IPR031330">
    <property type="entry name" value="Gly_Hdrlase_35_cat"/>
</dbReference>
<dbReference type="InterPro" id="IPR019801">
    <property type="entry name" value="Glyco_hydro_35_CS"/>
</dbReference>
<dbReference type="InterPro" id="IPR001944">
    <property type="entry name" value="Glycoside_Hdrlase_35"/>
</dbReference>
<dbReference type="InterPro" id="IPR017853">
    <property type="entry name" value="Glycoside_hydrolase_SF"/>
</dbReference>
<dbReference type="InterPro" id="IPR000922">
    <property type="entry name" value="Lectin_gal-bd_dom"/>
</dbReference>
<dbReference type="InterPro" id="IPR043159">
    <property type="entry name" value="Lectin_gal-bd_sf"/>
</dbReference>
<dbReference type="PANTHER" id="PTHR23421">
    <property type="entry name" value="BETA-GALACTOSIDASE RELATED"/>
    <property type="match status" value="1"/>
</dbReference>
<dbReference type="Pfam" id="PF21467">
    <property type="entry name" value="BetaGal_gal-bd"/>
    <property type="match status" value="1"/>
</dbReference>
<dbReference type="Pfam" id="PF17834">
    <property type="entry name" value="GHD"/>
    <property type="match status" value="1"/>
</dbReference>
<dbReference type="Pfam" id="PF01301">
    <property type="entry name" value="Glyco_hydro_35"/>
    <property type="match status" value="1"/>
</dbReference>
<dbReference type="Pfam" id="PF02140">
    <property type="entry name" value="SUEL_Lectin"/>
    <property type="match status" value="1"/>
</dbReference>
<dbReference type="PRINTS" id="PR00742">
    <property type="entry name" value="GLHYDRLASE35"/>
</dbReference>
<dbReference type="SUPFAM" id="SSF51445">
    <property type="entry name" value="(Trans)glycosidases"/>
    <property type="match status" value="1"/>
</dbReference>
<dbReference type="SUPFAM" id="SSF49785">
    <property type="entry name" value="Galactose-binding domain-like"/>
    <property type="match status" value="2"/>
</dbReference>
<dbReference type="PROSITE" id="PS01182">
    <property type="entry name" value="GLYCOSYL_HYDROL_F35"/>
    <property type="match status" value="1"/>
</dbReference>
<dbReference type="PROSITE" id="PS50228">
    <property type="entry name" value="SUEL_LECTIN"/>
    <property type="match status" value="1"/>
</dbReference>
<keyword id="KW-0025">Alternative splicing</keyword>
<keyword id="KW-0052">Apoplast</keyword>
<keyword id="KW-0325">Glycoprotein</keyword>
<keyword id="KW-0326">Glycosidase</keyword>
<keyword id="KW-0378">Hydrolase</keyword>
<keyword id="KW-1185">Reference proteome</keyword>
<keyword id="KW-0964">Secreted</keyword>
<keyword id="KW-0732">Signal</keyword>
<sequence length="887" mass="101222">MSKSSRIRMKSRTRYLIAILLVISLCSKASSHDDEKKKKGVTYDGTSLIINGKRELLFSGSVHYPRSTPHMWPSIIDKARIGGLNTIQTYVFWNVHEPEQGKYDFKGRFDLVKFIKLIHEKGLYVTLRLGPFIQAEWNHGGLPYWLREVPDVYFRTNNEPFKEHTERYVRKILGMMKEEKLFASQGGPIILGQIENEYNAVQLAYKENGEKYIKWAANLVESMNLGIPWVMCKQNDAPGNLINACNGRHCGDTFPGPNRHDKPSLWTENWTTQFRVFGDPPTQRTVEDIAFSVARYFSKNGSHVNYYMYHGGTNFGRTSAHFVTTRYYDDAPLDEFGLEKAPKYGHLKHVHRALRLCKKALFWGQLRAQTLGPDTEVRYYEQPGTKVCAAFLSNNNTRDTNTIKFKGQDYVLPSRSISILPDCKTVVYNTAQIVAQHSWRDFVKSEKTSKGLKFEMFSENIPSLLDGDSLIPGELYYLTKDKTDYAWYTTSVKIDEDDFPDQKGLKTILRVASLGHALIVYVNGEYAGKAHGRHEMKSFEFAKPVNFKTGDNRISILGVLTGLPDSGSYMEHRFAGPRAISIIGLKSGTRDLTENNEWGHLAGLEGEKKEVYTEEGSKKVKWEKDGKRKPLTWYKTYFETPEGVNAVAIRMKAMGKGLIWVNGIGVGRYWMSFLSPLGEPTQTEYHIPRSFMKGEKKKNMLVILEEEPGVKLESIDFVLVNRDTICSNVGEDYPVSVKSWKREGPKIVSRSKDMRLKAVMRCPPEKQMVEVQFASFGDPTGTCGNFTMGKCSASKSKEVVEKECLGRNYCSIVVARETFGDKGCPEIVKTLAVQVKCEKKEGKQDEKKKKEDKDEEEEDDEDDDEEEEEEDKENKDTKDMENKNQDM</sequence>